<sequence length="132" mass="14516">MAMTDPIADMLTRIRNAGLAKHQKCDMPASNVKLAIVNVLKELGYIKNFKQISDDKQGILRIYLKFDNENKHIIHAIDRVSTPGCRVYVGKDEIPVVKNGLGNAILSTSKGVMHDAAAREAQLGGEVLCSVW</sequence>
<protein>
    <recommendedName>
        <fullName evidence="1">Small ribosomal subunit protein uS8</fullName>
    </recommendedName>
    <alternativeName>
        <fullName evidence="2">30S ribosomal protein S8</fullName>
    </alternativeName>
</protein>
<gene>
    <name evidence="1" type="primary">rpsH</name>
    <name type="ordered locus">Pcar_0715</name>
</gene>
<evidence type="ECO:0000255" key="1">
    <source>
        <dbReference type="HAMAP-Rule" id="MF_01302"/>
    </source>
</evidence>
<evidence type="ECO:0000305" key="2"/>
<proteinExistence type="inferred from homology"/>
<name>RS8_SYNC1</name>
<reference key="1">
    <citation type="submission" date="2005-10" db="EMBL/GenBank/DDBJ databases">
        <title>Complete sequence of Pelobacter carbinolicus DSM 2380.</title>
        <authorList>
            <person name="Copeland A."/>
            <person name="Lucas S."/>
            <person name="Lapidus A."/>
            <person name="Barry K."/>
            <person name="Detter J.C."/>
            <person name="Glavina T."/>
            <person name="Hammon N."/>
            <person name="Israni S."/>
            <person name="Pitluck S."/>
            <person name="Chertkov O."/>
            <person name="Schmutz J."/>
            <person name="Larimer F."/>
            <person name="Land M."/>
            <person name="Kyrpides N."/>
            <person name="Ivanova N."/>
            <person name="Richardson P."/>
        </authorList>
    </citation>
    <scope>NUCLEOTIDE SEQUENCE [LARGE SCALE GENOMIC DNA]</scope>
    <source>
        <strain>DSM 2380 / NBRC 103641 / GraBd1</strain>
    </source>
</reference>
<keyword id="KW-1185">Reference proteome</keyword>
<keyword id="KW-0687">Ribonucleoprotein</keyword>
<keyword id="KW-0689">Ribosomal protein</keyword>
<keyword id="KW-0694">RNA-binding</keyword>
<keyword id="KW-0699">rRNA-binding</keyword>
<feature type="chain" id="PRO_0000225879" description="Small ribosomal subunit protein uS8">
    <location>
        <begin position="1"/>
        <end position="132"/>
    </location>
</feature>
<dbReference type="EMBL" id="CP000142">
    <property type="protein sequence ID" value="ABA87974.1"/>
    <property type="molecule type" value="Genomic_DNA"/>
</dbReference>
<dbReference type="RefSeq" id="WP_011340417.1">
    <property type="nucleotide sequence ID" value="NC_007498.2"/>
</dbReference>
<dbReference type="SMR" id="Q3A6N3"/>
<dbReference type="STRING" id="338963.Pcar_0715"/>
<dbReference type="KEGG" id="pca:Pcar_0715"/>
<dbReference type="eggNOG" id="COG0096">
    <property type="taxonomic scope" value="Bacteria"/>
</dbReference>
<dbReference type="HOGENOM" id="CLU_098428_0_2_7"/>
<dbReference type="OrthoDB" id="9802617at2"/>
<dbReference type="Proteomes" id="UP000002534">
    <property type="component" value="Chromosome"/>
</dbReference>
<dbReference type="GO" id="GO:1990904">
    <property type="term" value="C:ribonucleoprotein complex"/>
    <property type="evidence" value="ECO:0007669"/>
    <property type="project" value="UniProtKB-KW"/>
</dbReference>
<dbReference type="GO" id="GO:0005840">
    <property type="term" value="C:ribosome"/>
    <property type="evidence" value="ECO:0007669"/>
    <property type="project" value="UniProtKB-KW"/>
</dbReference>
<dbReference type="GO" id="GO:0019843">
    <property type="term" value="F:rRNA binding"/>
    <property type="evidence" value="ECO:0007669"/>
    <property type="project" value="UniProtKB-UniRule"/>
</dbReference>
<dbReference type="GO" id="GO:0003735">
    <property type="term" value="F:structural constituent of ribosome"/>
    <property type="evidence" value="ECO:0007669"/>
    <property type="project" value="InterPro"/>
</dbReference>
<dbReference type="GO" id="GO:0006412">
    <property type="term" value="P:translation"/>
    <property type="evidence" value="ECO:0007669"/>
    <property type="project" value="UniProtKB-UniRule"/>
</dbReference>
<dbReference type="FunFam" id="3.30.1370.30:FF:000002">
    <property type="entry name" value="30S ribosomal protein S8"/>
    <property type="match status" value="1"/>
</dbReference>
<dbReference type="FunFam" id="3.30.1490.10:FF:000001">
    <property type="entry name" value="30S ribosomal protein S8"/>
    <property type="match status" value="1"/>
</dbReference>
<dbReference type="Gene3D" id="3.30.1370.30">
    <property type="match status" value="1"/>
</dbReference>
<dbReference type="Gene3D" id="3.30.1490.10">
    <property type="match status" value="1"/>
</dbReference>
<dbReference type="HAMAP" id="MF_01302_B">
    <property type="entry name" value="Ribosomal_uS8_B"/>
    <property type="match status" value="1"/>
</dbReference>
<dbReference type="InterPro" id="IPR000630">
    <property type="entry name" value="Ribosomal_uS8"/>
</dbReference>
<dbReference type="InterPro" id="IPR047863">
    <property type="entry name" value="Ribosomal_uS8_CS"/>
</dbReference>
<dbReference type="InterPro" id="IPR035987">
    <property type="entry name" value="Ribosomal_uS8_sf"/>
</dbReference>
<dbReference type="NCBIfam" id="NF001109">
    <property type="entry name" value="PRK00136.1"/>
    <property type="match status" value="1"/>
</dbReference>
<dbReference type="PANTHER" id="PTHR11758">
    <property type="entry name" value="40S RIBOSOMAL PROTEIN S15A"/>
    <property type="match status" value="1"/>
</dbReference>
<dbReference type="Pfam" id="PF00410">
    <property type="entry name" value="Ribosomal_S8"/>
    <property type="match status" value="1"/>
</dbReference>
<dbReference type="SUPFAM" id="SSF56047">
    <property type="entry name" value="Ribosomal protein S8"/>
    <property type="match status" value="1"/>
</dbReference>
<dbReference type="PROSITE" id="PS00053">
    <property type="entry name" value="RIBOSOMAL_S8"/>
    <property type="match status" value="1"/>
</dbReference>
<comment type="function">
    <text evidence="1">One of the primary rRNA binding proteins, it binds directly to 16S rRNA central domain where it helps coordinate assembly of the platform of the 30S subunit.</text>
</comment>
<comment type="subunit">
    <text evidence="1">Part of the 30S ribosomal subunit. Contacts proteins S5 and S12.</text>
</comment>
<comment type="similarity">
    <text evidence="1">Belongs to the universal ribosomal protein uS8 family.</text>
</comment>
<accession>Q3A6N3</accession>
<organism>
    <name type="scientific">Syntrophotalea carbinolica (strain DSM 2380 / NBRC 103641 / GraBd1)</name>
    <name type="common">Pelobacter carbinolicus</name>
    <dbReference type="NCBI Taxonomy" id="338963"/>
    <lineage>
        <taxon>Bacteria</taxon>
        <taxon>Pseudomonadati</taxon>
        <taxon>Thermodesulfobacteriota</taxon>
        <taxon>Desulfuromonadia</taxon>
        <taxon>Desulfuromonadales</taxon>
        <taxon>Syntrophotaleaceae</taxon>
        <taxon>Syntrophotalea</taxon>
    </lineage>
</organism>